<reference key="1">
    <citation type="journal article" date="2008" name="J. Bacteriol.">
        <title>Insights into the environmental resistance gene pool from the genome sequence of the multidrug-resistant environmental isolate Escherichia coli SMS-3-5.</title>
        <authorList>
            <person name="Fricke W.F."/>
            <person name="Wright M.S."/>
            <person name="Lindell A.H."/>
            <person name="Harkins D.M."/>
            <person name="Baker-Austin C."/>
            <person name="Ravel J."/>
            <person name="Stepanauskas R."/>
        </authorList>
    </citation>
    <scope>NUCLEOTIDE SEQUENCE [LARGE SCALE GENOMIC DNA]</scope>
    <source>
        <strain>SMS-3-5 / SECEC</strain>
    </source>
</reference>
<feature type="chain" id="PRO_1000145718" description="Cation/acetate symporter ActP">
    <location>
        <begin position="1"/>
        <end position="549"/>
    </location>
</feature>
<feature type="transmembrane region" description="Helical" evidence="1">
    <location>
        <begin position="33"/>
        <end position="53"/>
    </location>
</feature>
<feature type="transmembrane region" description="Helical" evidence="1">
    <location>
        <begin position="77"/>
        <end position="97"/>
    </location>
</feature>
<feature type="transmembrane region" description="Helical" evidence="1">
    <location>
        <begin position="103"/>
        <end position="123"/>
    </location>
</feature>
<feature type="transmembrane region" description="Helical" evidence="1">
    <location>
        <begin position="148"/>
        <end position="168"/>
    </location>
</feature>
<feature type="transmembrane region" description="Helical" evidence="1">
    <location>
        <begin position="183"/>
        <end position="203"/>
    </location>
</feature>
<feature type="transmembrane region" description="Helical" evidence="1">
    <location>
        <begin position="206"/>
        <end position="226"/>
    </location>
</feature>
<feature type="transmembrane region" description="Helical" evidence="1">
    <location>
        <begin position="262"/>
        <end position="282"/>
    </location>
</feature>
<feature type="transmembrane region" description="Helical" evidence="1">
    <location>
        <begin position="303"/>
        <end position="323"/>
    </location>
</feature>
<feature type="transmembrane region" description="Helical" evidence="1">
    <location>
        <begin position="355"/>
        <end position="375"/>
    </location>
</feature>
<feature type="transmembrane region" description="Helical" evidence="1">
    <location>
        <begin position="404"/>
        <end position="424"/>
    </location>
</feature>
<feature type="transmembrane region" description="Helical" evidence="1">
    <location>
        <begin position="428"/>
        <end position="448"/>
    </location>
</feature>
<feature type="transmembrane region" description="Helical" evidence="1">
    <location>
        <begin position="464"/>
        <end position="484"/>
    </location>
</feature>
<feature type="transmembrane region" description="Helical" evidence="1">
    <location>
        <begin position="493"/>
        <end position="513"/>
    </location>
</feature>
<name>ACTP_ECOSM</name>
<accession>B1LPN2</accession>
<sequence length="549" mass="59192">MKRVLTALAATLPFAANAADAISGAVERQPTNWQAIIMFLIFVVFTLGITYWASKRVRSRNDYYTAGGNITGFQNGLAIAGDYMSAASFLGISALVFTSGYDGLIYSLGFLVGWPIILFLIAERLRNLGRYTFADVASYRLKQGPIRILSACGSLVVVALYLIAQMVGAGKLIELLFGLNYHIAVVLVGVLMMMYVLFGGMLATTWVQIIKAVLLLFGASFMAFMVMKHVGFSFNNLFSEAMAVHPKGVDIMKPGGLVKDPISALSLGLGLMFGTAGLPHILMRFFTVSDAREARKSVFYATGFMGYFYILTFIIGFGAIMLVGANPEYKDAAGHLIGGNNMAAVHLANAVGGNLFLGFISAVAFATILAVVAGLTLAGASAVSHDLYANVFKKGATEREELRVSKITVLILGVIAIILGVLFENQNIAFMVGLAFAIAASCNFPIILLSMYWSKLTTRGAMLGGWLGLITAVVLMILGPTIWVQILGHEKAIFPYEYPALFSISVAFLGIWFFSATDNSAEGARERELFRAQFIRSQTGFGVEQGRAH</sequence>
<organism>
    <name type="scientific">Escherichia coli (strain SMS-3-5 / SECEC)</name>
    <dbReference type="NCBI Taxonomy" id="439855"/>
    <lineage>
        <taxon>Bacteria</taxon>
        <taxon>Pseudomonadati</taxon>
        <taxon>Pseudomonadota</taxon>
        <taxon>Gammaproteobacteria</taxon>
        <taxon>Enterobacterales</taxon>
        <taxon>Enterobacteriaceae</taxon>
        <taxon>Escherichia</taxon>
    </lineage>
</organism>
<protein>
    <recommendedName>
        <fullName evidence="1">Cation/acetate symporter ActP</fullName>
    </recommendedName>
    <alternativeName>
        <fullName evidence="1">Acetate permease</fullName>
    </alternativeName>
    <alternativeName>
        <fullName evidence="1">Acetate transporter ActP</fullName>
    </alternativeName>
</protein>
<keyword id="KW-0997">Cell inner membrane</keyword>
<keyword id="KW-1003">Cell membrane</keyword>
<keyword id="KW-0406">Ion transport</keyword>
<keyword id="KW-0472">Membrane</keyword>
<keyword id="KW-0915">Sodium</keyword>
<keyword id="KW-0739">Sodium transport</keyword>
<keyword id="KW-0769">Symport</keyword>
<keyword id="KW-0812">Transmembrane</keyword>
<keyword id="KW-1133">Transmembrane helix</keyword>
<keyword id="KW-0813">Transport</keyword>
<proteinExistence type="inferred from homology"/>
<comment type="function">
    <text evidence="1">Transports acetate.</text>
</comment>
<comment type="subcellular location">
    <subcellularLocation>
        <location evidence="1">Cell inner membrane</location>
        <topology evidence="1">Multi-pass membrane protein</topology>
    </subcellularLocation>
</comment>
<comment type="similarity">
    <text evidence="1">Belongs to the sodium:solute symporter (SSF) (TC 2.A.21) family.</text>
</comment>
<gene>
    <name evidence="1" type="primary">actP</name>
    <name type="ordered locus">EcSMS35_4529</name>
</gene>
<dbReference type="EMBL" id="CP000970">
    <property type="protein sequence ID" value="ACB18467.1"/>
    <property type="molecule type" value="Genomic_DNA"/>
</dbReference>
<dbReference type="RefSeq" id="WP_000832548.1">
    <property type="nucleotide sequence ID" value="NC_010498.1"/>
</dbReference>
<dbReference type="SMR" id="B1LPN2"/>
<dbReference type="KEGG" id="ecm:EcSMS35_4529"/>
<dbReference type="HOGENOM" id="CLU_018808_8_3_6"/>
<dbReference type="Proteomes" id="UP000007011">
    <property type="component" value="Chromosome"/>
</dbReference>
<dbReference type="GO" id="GO:0005886">
    <property type="term" value="C:plasma membrane"/>
    <property type="evidence" value="ECO:0007669"/>
    <property type="project" value="UniProtKB-SubCell"/>
</dbReference>
<dbReference type="GO" id="GO:0015123">
    <property type="term" value="F:acetate transmembrane transporter activity"/>
    <property type="evidence" value="ECO:0007669"/>
    <property type="project" value="UniProtKB-UniRule"/>
</dbReference>
<dbReference type="GO" id="GO:0043879">
    <property type="term" value="F:glycolate transmembrane transporter activity"/>
    <property type="evidence" value="ECO:0007669"/>
    <property type="project" value="InterPro"/>
</dbReference>
<dbReference type="GO" id="GO:0015293">
    <property type="term" value="F:symporter activity"/>
    <property type="evidence" value="ECO:0007669"/>
    <property type="project" value="UniProtKB-KW"/>
</dbReference>
<dbReference type="GO" id="GO:0006847">
    <property type="term" value="P:plasma membrane acetate transport"/>
    <property type="evidence" value="ECO:0007669"/>
    <property type="project" value="TreeGrafter"/>
</dbReference>
<dbReference type="GO" id="GO:0006814">
    <property type="term" value="P:sodium ion transport"/>
    <property type="evidence" value="ECO:0007669"/>
    <property type="project" value="UniProtKB-KW"/>
</dbReference>
<dbReference type="CDD" id="cd11480">
    <property type="entry name" value="SLC5sbd_u4"/>
    <property type="match status" value="1"/>
</dbReference>
<dbReference type="FunFam" id="1.20.1730.10:FF:000001">
    <property type="entry name" value="Cation/acetate symporter ActP"/>
    <property type="match status" value="1"/>
</dbReference>
<dbReference type="Gene3D" id="1.20.1730.10">
    <property type="entry name" value="Sodium/glucose cotransporter"/>
    <property type="match status" value="1"/>
</dbReference>
<dbReference type="HAMAP" id="MF_01426">
    <property type="entry name" value="Acet_symport_ActP"/>
    <property type="match status" value="1"/>
</dbReference>
<dbReference type="InterPro" id="IPR014083">
    <property type="entry name" value="Cation/Ac_symporter_ActP"/>
</dbReference>
<dbReference type="InterPro" id="IPR038377">
    <property type="entry name" value="Na/Glc_symporter_sf"/>
</dbReference>
<dbReference type="InterPro" id="IPR001734">
    <property type="entry name" value="Na/solute_symporter"/>
</dbReference>
<dbReference type="InterPro" id="IPR018212">
    <property type="entry name" value="Na/solute_symporter_CS"/>
</dbReference>
<dbReference type="InterPro" id="IPR050277">
    <property type="entry name" value="Sodium:Solute_Symporter"/>
</dbReference>
<dbReference type="NCBIfam" id="NF006903">
    <property type="entry name" value="PRK09395.1"/>
    <property type="match status" value="1"/>
</dbReference>
<dbReference type="NCBIfam" id="NF009135">
    <property type="entry name" value="PRK12488.1"/>
    <property type="match status" value="1"/>
</dbReference>
<dbReference type="NCBIfam" id="TIGR00813">
    <property type="entry name" value="sss"/>
    <property type="match status" value="1"/>
</dbReference>
<dbReference type="NCBIfam" id="TIGR02711">
    <property type="entry name" value="symport_actP"/>
    <property type="match status" value="1"/>
</dbReference>
<dbReference type="PANTHER" id="PTHR48086:SF6">
    <property type="entry name" value="CATION_ACETATE SYMPORTER ACTP"/>
    <property type="match status" value="1"/>
</dbReference>
<dbReference type="PANTHER" id="PTHR48086">
    <property type="entry name" value="SODIUM/PROLINE SYMPORTER-RELATED"/>
    <property type="match status" value="1"/>
</dbReference>
<dbReference type="Pfam" id="PF00474">
    <property type="entry name" value="SSF"/>
    <property type="match status" value="1"/>
</dbReference>
<dbReference type="PROSITE" id="PS00456">
    <property type="entry name" value="NA_SOLUT_SYMP_1"/>
    <property type="match status" value="1"/>
</dbReference>
<dbReference type="PROSITE" id="PS00457">
    <property type="entry name" value="NA_SOLUT_SYMP_2"/>
    <property type="match status" value="1"/>
</dbReference>
<dbReference type="PROSITE" id="PS50283">
    <property type="entry name" value="NA_SOLUT_SYMP_3"/>
    <property type="match status" value="1"/>
</dbReference>
<evidence type="ECO:0000255" key="1">
    <source>
        <dbReference type="HAMAP-Rule" id="MF_01426"/>
    </source>
</evidence>